<proteinExistence type="inferred from homology"/>
<evidence type="ECO:0000255" key="1">
    <source>
        <dbReference type="HAMAP-Rule" id="MF_03057"/>
    </source>
</evidence>
<dbReference type="EMBL" id="CM000071">
    <property type="protein sequence ID" value="EDY68767.1"/>
    <property type="molecule type" value="Genomic_DNA"/>
</dbReference>
<dbReference type="RefSeq" id="XP_002138209.1">
    <property type="nucleotide sequence ID" value="XM_002138173.2"/>
</dbReference>
<dbReference type="SMR" id="B5DZ31"/>
<dbReference type="FunCoup" id="B5DZ31">
    <property type="interactions" value="1319"/>
</dbReference>
<dbReference type="STRING" id="46245.B5DZ31"/>
<dbReference type="EnsemblMetazoa" id="FBtr0278612">
    <property type="protein sequence ID" value="FBpp0277050"/>
    <property type="gene ID" value="FBgn0245914"/>
</dbReference>
<dbReference type="KEGG" id="dpo:6898130"/>
<dbReference type="eggNOG" id="KOG3326">
    <property type="taxonomic scope" value="Eukaryota"/>
</dbReference>
<dbReference type="HOGENOM" id="CLU_103054_0_3_1"/>
<dbReference type="InParanoid" id="B5DZ31"/>
<dbReference type="OMA" id="YGKPQNP"/>
<dbReference type="Proteomes" id="UP000001819">
    <property type="component" value="Chromosome 3"/>
</dbReference>
<dbReference type="Bgee" id="FBgn0245914">
    <property type="expression patterns" value="Expressed in male reproductive system and 3 other cell types or tissues"/>
</dbReference>
<dbReference type="GO" id="GO:0005759">
    <property type="term" value="C:mitochondrial matrix"/>
    <property type="evidence" value="ECO:0007669"/>
    <property type="project" value="UniProtKB-SubCell"/>
</dbReference>
<dbReference type="GO" id="GO:0005739">
    <property type="term" value="C:mitochondrion"/>
    <property type="evidence" value="ECO:0000250"/>
    <property type="project" value="UniProtKB"/>
</dbReference>
<dbReference type="GO" id="GO:0006121">
    <property type="term" value="P:mitochondrial electron transport, succinate to ubiquinone"/>
    <property type="evidence" value="ECO:0000250"/>
    <property type="project" value="UniProtKB"/>
</dbReference>
<dbReference type="GO" id="GO:0034553">
    <property type="term" value="P:mitochondrial respiratory chain complex II assembly"/>
    <property type="evidence" value="ECO:0007669"/>
    <property type="project" value="TreeGrafter"/>
</dbReference>
<dbReference type="GO" id="GO:0018293">
    <property type="term" value="P:protein-FAD linkage"/>
    <property type="evidence" value="ECO:0000250"/>
    <property type="project" value="UniProtKB"/>
</dbReference>
<dbReference type="GO" id="GO:0006099">
    <property type="term" value="P:tricarboxylic acid cycle"/>
    <property type="evidence" value="ECO:0007669"/>
    <property type="project" value="TreeGrafter"/>
</dbReference>
<dbReference type="FunFam" id="1.10.150.250:FF:000002">
    <property type="entry name" value="Succinate dehydrogenase assembly factor 2, mitochondrial"/>
    <property type="match status" value="1"/>
</dbReference>
<dbReference type="Gene3D" id="1.10.150.250">
    <property type="entry name" value="Flavinator of succinate dehydrogenase"/>
    <property type="match status" value="1"/>
</dbReference>
<dbReference type="HAMAP" id="MF_03057">
    <property type="entry name" value="SDHAF2"/>
    <property type="match status" value="1"/>
</dbReference>
<dbReference type="InterPro" id="IPR005631">
    <property type="entry name" value="SDH"/>
</dbReference>
<dbReference type="InterPro" id="IPR036714">
    <property type="entry name" value="SDH_sf"/>
</dbReference>
<dbReference type="InterPro" id="IPR028882">
    <property type="entry name" value="SDHAF2"/>
</dbReference>
<dbReference type="PANTHER" id="PTHR12469">
    <property type="entry name" value="PROTEIN EMI5 HOMOLOG, MITOCHONDRIAL"/>
    <property type="match status" value="1"/>
</dbReference>
<dbReference type="PANTHER" id="PTHR12469:SF2">
    <property type="entry name" value="SUCCINATE DEHYDROGENASE ASSEMBLY FACTOR 2, MITOCHONDRIAL"/>
    <property type="match status" value="1"/>
</dbReference>
<dbReference type="Pfam" id="PF03937">
    <property type="entry name" value="Sdh5"/>
    <property type="match status" value="1"/>
</dbReference>
<dbReference type="SUPFAM" id="SSF109910">
    <property type="entry name" value="YgfY-like"/>
    <property type="match status" value="1"/>
</dbReference>
<protein>
    <recommendedName>
        <fullName evidence="1">Succinate dehydrogenase assembly factor 2-B, mitochondrial</fullName>
        <shortName evidence="1">SDH assembly factor 2-B</shortName>
        <shortName evidence="1">SDHAF2-B</shortName>
    </recommendedName>
</protein>
<feature type="transit peptide" description="Mitochondrion" evidence="1">
    <location>
        <begin position="1"/>
        <end position="23"/>
    </location>
</feature>
<feature type="chain" id="PRO_0000383174" description="Succinate dehydrogenase assembly factor 2-B, mitochondrial">
    <location>
        <begin position="24"/>
        <end position="160"/>
    </location>
</feature>
<organism>
    <name type="scientific">Drosophila pseudoobscura pseudoobscura</name>
    <name type="common">Fruit fly</name>
    <dbReference type="NCBI Taxonomy" id="46245"/>
    <lineage>
        <taxon>Eukaryota</taxon>
        <taxon>Metazoa</taxon>
        <taxon>Ecdysozoa</taxon>
        <taxon>Arthropoda</taxon>
        <taxon>Hexapoda</taxon>
        <taxon>Insecta</taxon>
        <taxon>Pterygota</taxon>
        <taxon>Neoptera</taxon>
        <taxon>Endopterygota</taxon>
        <taxon>Diptera</taxon>
        <taxon>Brachycera</taxon>
        <taxon>Muscomorpha</taxon>
        <taxon>Ephydroidea</taxon>
        <taxon>Drosophilidae</taxon>
        <taxon>Drosophila</taxon>
        <taxon>Sophophora</taxon>
    </lineage>
</organism>
<reference key="1">
    <citation type="journal article" date="2005" name="Genome Res.">
        <title>Comparative genome sequencing of Drosophila pseudoobscura: chromosomal, gene, and cis-element evolution.</title>
        <authorList>
            <person name="Richards S."/>
            <person name="Liu Y."/>
            <person name="Bettencourt B.R."/>
            <person name="Hradecky P."/>
            <person name="Letovsky S."/>
            <person name="Nielsen R."/>
            <person name="Thornton K."/>
            <person name="Hubisz M.J."/>
            <person name="Chen R."/>
            <person name="Meisel R.P."/>
            <person name="Couronne O."/>
            <person name="Hua S."/>
            <person name="Smith M.A."/>
            <person name="Zhang P."/>
            <person name="Liu J."/>
            <person name="Bussemaker H.J."/>
            <person name="van Batenburg M.F."/>
            <person name="Howells S.L."/>
            <person name="Scherer S.E."/>
            <person name="Sodergren E."/>
            <person name="Matthews B.B."/>
            <person name="Crosby M.A."/>
            <person name="Schroeder A.J."/>
            <person name="Ortiz-Barrientos D."/>
            <person name="Rives C.M."/>
            <person name="Metzker M.L."/>
            <person name="Muzny D.M."/>
            <person name="Scott G."/>
            <person name="Steffen D."/>
            <person name="Wheeler D.A."/>
            <person name="Worley K.C."/>
            <person name="Havlak P."/>
            <person name="Durbin K.J."/>
            <person name="Egan A."/>
            <person name="Gill R."/>
            <person name="Hume J."/>
            <person name="Morgan M.B."/>
            <person name="Miner G."/>
            <person name="Hamilton C."/>
            <person name="Huang Y."/>
            <person name="Waldron L."/>
            <person name="Verduzco D."/>
            <person name="Clerc-Blankenburg K.P."/>
            <person name="Dubchak I."/>
            <person name="Noor M.A.F."/>
            <person name="Anderson W."/>
            <person name="White K.P."/>
            <person name="Clark A.G."/>
            <person name="Schaeffer S.W."/>
            <person name="Gelbart W.M."/>
            <person name="Weinstock G.M."/>
            <person name="Gibbs R.A."/>
        </authorList>
    </citation>
    <scope>NUCLEOTIDE SEQUENCE [LARGE SCALE GENOMIC DNA]</scope>
    <source>
        <strain>MV2-25 / Tucson 14011-0121.94</strain>
    </source>
</reference>
<sequence>MLRQLKLTLNISRWIFMPWQRHASASSSQVPPFLAPISDDVIVDYEDPDYLPLPEYPVRPNEPLETRKQRLLYQSRKRGMLENDLLLSTFAAKYLKDFSAEQTAIYDQLINGVSNDWDIYYWATEVKPTPEEYNTEIMKLLKEHVKNAERVTRFRQPDLT</sequence>
<accession>B5DZ31</accession>
<keyword id="KW-0143">Chaperone</keyword>
<keyword id="KW-0496">Mitochondrion</keyword>
<keyword id="KW-1185">Reference proteome</keyword>
<keyword id="KW-0809">Transit peptide</keyword>
<gene>
    <name type="ORF">GA24523</name>
</gene>
<comment type="function">
    <text evidence="1">Plays an essential role in the assembly of succinate dehydrogenase (SDH), an enzyme complex (also referred to as respiratory complex II) that is a component of both the tricarboxylic acid (TCA) cycle and the mitochondrial electron transport chain, and which couples the oxidation of succinate to fumarate with the reduction of ubiquinone (coenzyme Q) to ubiquinol. Required for flavinylation (covalent attachment of FAD) of the flavoprotein subunit of the SDH catalytic dimer.</text>
</comment>
<comment type="subunit">
    <text evidence="1">Interacts with the flavoprotein subunit within the SDH catalytic dimer.</text>
</comment>
<comment type="subcellular location">
    <subcellularLocation>
        <location evidence="1">Mitochondrion matrix</location>
    </subcellularLocation>
</comment>
<comment type="similarity">
    <text evidence="1">Belongs to the SDHAF2 family.</text>
</comment>
<name>SDF2B_DROPS</name>